<keyword id="KW-1185">Reference proteome</keyword>
<keyword id="KW-0687">Ribonucleoprotein</keyword>
<keyword id="KW-0689">Ribosomal protein</keyword>
<keyword id="KW-0694">RNA-binding</keyword>
<keyword id="KW-0699">rRNA-binding</keyword>
<proteinExistence type="inferred from homology"/>
<reference key="1">
    <citation type="journal article" date="2003" name="Proc. Natl. Acad. Sci. U.S.A.">
        <title>The complete genome sequence of Chromobacterium violaceum reveals remarkable and exploitable bacterial adaptability.</title>
        <authorList>
            <person name="Vasconcelos A.T.R."/>
            <person name="de Almeida D.F."/>
            <person name="Hungria M."/>
            <person name="Guimaraes C.T."/>
            <person name="Antonio R.V."/>
            <person name="Almeida F.C."/>
            <person name="de Almeida L.G.P."/>
            <person name="de Almeida R."/>
            <person name="Alves-Gomes J.A."/>
            <person name="Andrade E.M."/>
            <person name="Araripe J."/>
            <person name="de Araujo M.F.F."/>
            <person name="Astolfi-Filho S."/>
            <person name="Azevedo V."/>
            <person name="Baptista A.J."/>
            <person name="Bataus L.A.M."/>
            <person name="Batista J.S."/>
            <person name="Belo A."/>
            <person name="van den Berg C."/>
            <person name="Bogo M."/>
            <person name="Bonatto S."/>
            <person name="Bordignon J."/>
            <person name="Brigido M.M."/>
            <person name="Brito C.A."/>
            <person name="Brocchi M."/>
            <person name="Burity H.A."/>
            <person name="Camargo A.A."/>
            <person name="Cardoso D.D.P."/>
            <person name="Carneiro N.P."/>
            <person name="Carraro D.M."/>
            <person name="Carvalho C.M.B."/>
            <person name="Cascardo J.C.M."/>
            <person name="Cavada B.S."/>
            <person name="Chueire L.M.O."/>
            <person name="Creczynski-Pasa T.B."/>
            <person name="Cunha-Junior N.C."/>
            <person name="Fagundes N."/>
            <person name="Falcao C.L."/>
            <person name="Fantinatti F."/>
            <person name="Farias I.P."/>
            <person name="Felipe M.S.S."/>
            <person name="Ferrari L.P."/>
            <person name="Ferro J.A."/>
            <person name="Ferro M.I.T."/>
            <person name="Franco G.R."/>
            <person name="Freitas N.S.A."/>
            <person name="Furlan L.R."/>
            <person name="Gazzinelli R.T."/>
            <person name="Gomes E.A."/>
            <person name="Goncalves P.R."/>
            <person name="Grangeiro T.B."/>
            <person name="Grattapaglia D."/>
            <person name="Grisard E.C."/>
            <person name="Hanna E.S."/>
            <person name="Jardim S.N."/>
            <person name="Laurino J."/>
            <person name="Leoi L.C.T."/>
            <person name="Lima L.F.A."/>
            <person name="Loureiro M.F."/>
            <person name="Lyra M.C.C.P."/>
            <person name="Madeira H.M.F."/>
            <person name="Manfio G.P."/>
            <person name="Maranhao A.Q."/>
            <person name="Martins W.S."/>
            <person name="di Mauro S.M.Z."/>
            <person name="de Medeiros S.R.B."/>
            <person name="Meissner R.V."/>
            <person name="Moreira M.A.M."/>
            <person name="Nascimento F.F."/>
            <person name="Nicolas M.F."/>
            <person name="Oliveira J.G."/>
            <person name="Oliveira S.C."/>
            <person name="Paixao R.F.C."/>
            <person name="Parente J.A."/>
            <person name="Pedrosa F.O."/>
            <person name="Pena S.D.J."/>
            <person name="Pereira J.O."/>
            <person name="Pereira M."/>
            <person name="Pinto L.S.R.C."/>
            <person name="Pinto L.S."/>
            <person name="Porto J.I.R."/>
            <person name="Potrich D.P."/>
            <person name="Ramalho-Neto C.E."/>
            <person name="Reis A.M.M."/>
            <person name="Rigo L.U."/>
            <person name="Rondinelli E."/>
            <person name="Santos E.B.P."/>
            <person name="Santos F.R."/>
            <person name="Schneider M.P.C."/>
            <person name="Seuanez H.N."/>
            <person name="Silva A.M.R."/>
            <person name="da Silva A.L.C."/>
            <person name="Silva D.W."/>
            <person name="Silva R."/>
            <person name="Simoes I.C."/>
            <person name="Simon D."/>
            <person name="Soares C.M.A."/>
            <person name="Soares R.B.A."/>
            <person name="Souza E.M."/>
            <person name="Souza K.R.L."/>
            <person name="Souza R.C."/>
            <person name="Steffens M.B.R."/>
            <person name="Steindel M."/>
            <person name="Teixeira S.R."/>
            <person name="Urmenyi T."/>
            <person name="Vettore A."/>
            <person name="Wassem R."/>
            <person name="Zaha A."/>
            <person name="Simpson A.J.G."/>
        </authorList>
    </citation>
    <scope>NUCLEOTIDE SEQUENCE [LARGE SCALE GENOMIC DNA]</scope>
    <source>
        <strain>ATCC 12472 / DSM 30191 / JCM 1249 / CCUG 213 / NBRC 12614 / NCIMB 9131 / NCTC 9757 / MK</strain>
    </source>
</reference>
<feature type="chain" id="PRO_0000129206" description="Large ribosomal subunit protein uL4">
    <location>
        <begin position="1"/>
        <end position="206"/>
    </location>
</feature>
<feature type="region of interest" description="Disordered" evidence="2">
    <location>
        <begin position="51"/>
        <end position="96"/>
    </location>
</feature>
<name>RL4_CHRVO</name>
<dbReference type="EMBL" id="AE016825">
    <property type="protein sequence ID" value="AAQ61845.1"/>
    <property type="molecule type" value="Genomic_DNA"/>
</dbReference>
<dbReference type="RefSeq" id="WP_011137732.1">
    <property type="nucleotide sequence ID" value="NC_005085.1"/>
</dbReference>
<dbReference type="SMR" id="Q7NQF3"/>
<dbReference type="STRING" id="243365.CV_4185"/>
<dbReference type="GeneID" id="97477816"/>
<dbReference type="KEGG" id="cvi:CV_4185"/>
<dbReference type="eggNOG" id="COG0088">
    <property type="taxonomic scope" value="Bacteria"/>
</dbReference>
<dbReference type="HOGENOM" id="CLU_041575_5_2_4"/>
<dbReference type="OrthoDB" id="9803201at2"/>
<dbReference type="Proteomes" id="UP000001424">
    <property type="component" value="Chromosome"/>
</dbReference>
<dbReference type="GO" id="GO:1990904">
    <property type="term" value="C:ribonucleoprotein complex"/>
    <property type="evidence" value="ECO:0007669"/>
    <property type="project" value="UniProtKB-KW"/>
</dbReference>
<dbReference type="GO" id="GO:0005840">
    <property type="term" value="C:ribosome"/>
    <property type="evidence" value="ECO:0007669"/>
    <property type="project" value="UniProtKB-KW"/>
</dbReference>
<dbReference type="GO" id="GO:0019843">
    <property type="term" value="F:rRNA binding"/>
    <property type="evidence" value="ECO:0007669"/>
    <property type="project" value="UniProtKB-UniRule"/>
</dbReference>
<dbReference type="GO" id="GO:0003735">
    <property type="term" value="F:structural constituent of ribosome"/>
    <property type="evidence" value="ECO:0007669"/>
    <property type="project" value="InterPro"/>
</dbReference>
<dbReference type="GO" id="GO:0006412">
    <property type="term" value="P:translation"/>
    <property type="evidence" value="ECO:0007669"/>
    <property type="project" value="UniProtKB-UniRule"/>
</dbReference>
<dbReference type="Gene3D" id="3.40.1370.10">
    <property type="match status" value="1"/>
</dbReference>
<dbReference type="HAMAP" id="MF_01328_B">
    <property type="entry name" value="Ribosomal_uL4_B"/>
    <property type="match status" value="1"/>
</dbReference>
<dbReference type="InterPro" id="IPR002136">
    <property type="entry name" value="Ribosomal_uL4"/>
</dbReference>
<dbReference type="InterPro" id="IPR013005">
    <property type="entry name" value="Ribosomal_uL4-like"/>
</dbReference>
<dbReference type="InterPro" id="IPR023574">
    <property type="entry name" value="Ribosomal_uL4_dom_sf"/>
</dbReference>
<dbReference type="NCBIfam" id="TIGR03953">
    <property type="entry name" value="rplD_bact"/>
    <property type="match status" value="1"/>
</dbReference>
<dbReference type="PANTHER" id="PTHR10746">
    <property type="entry name" value="50S RIBOSOMAL PROTEIN L4"/>
    <property type="match status" value="1"/>
</dbReference>
<dbReference type="PANTHER" id="PTHR10746:SF6">
    <property type="entry name" value="LARGE RIBOSOMAL SUBUNIT PROTEIN UL4M"/>
    <property type="match status" value="1"/>
</dbReference>
<dbReference type="Pfam" id="PF00573">
    <property type="entry name" value="Ribosomal_L4"/>
    <property type="match status" value="1"/>
</dbReference>
<dbReference type="SUPFAM" id="SSF52166">
    <property type="entry name" value="Ribosomal protein L4"/>
    <property type="match status" value="1"/>
</dbReference>
<protein>
    <recommendedName>
        <fullName evidence="1">Large ribosomal subunit protein uL4</fullName>
    </recommendedName>
    <alternativeName>
        <fullName evidence="3">50S ribosomal protein L4</fullName>
    </alternativeName>
</protein>
<accession>Q7NQF3</accession>
<comment type="function">
    <text evidence="1">One of the primary rRNA binding proteins, this protein initially binds near the 5'-end of the 23S rRNA. It is important during the early stages of 50S assembly. It makes multiple contacts with different domains of the 23S rRNA in the assembled 50S subunit and ribosome.</text>
</comment>
<comment type="function">
    <text evidence="1">Forms part of the polypeptide exit tunnel.</text>
</comment>
<comment type="subunit">
    <text evidence="1">Part of the 50S ribosomal subunit.</text>
</comment>
<comment type="similarity">
    <text evidence="1">Belongs to the universal ribosomal protein uL4 family.</text>
</comment>
<evidence type="ECO:0000255" key="1">
    <source>
        <dbReference type="HAMAP-Rule" id="MF_01328"/>
    </source>
</evidence>
<evidence type="ECO:0000256" key="2">
    <source>
        <dbReference type="SAM" id="MobiDB-lite"/>
    </source>
</evidence>
<evidence type="ECO:0000305" key="3"/>
<organism>
    <name type="scientific">Chromobacterium violaceum (strain ATCC 12472 / DSM 30191 / JCM 1249 / CCUG 213 / NBRC 12614 / NCIMB 9131 / NCTC 9757 / MK)</name>
    <dbReference type="NCBI Taxonomy" id="243365"/>
    <lineage>
        <taxon>Bacteria</taxon>
        <taxon>Pseudomonadati</taxon>
        <taxon>Pseudomonadota</taxon>
        <taxon>Betaproteobacteria</taxon>
        <taxon>Neisseriales</taxon>
        <taxon>Chromobacteriaceae</taxon>
        <taxon>Chromobacterium</taxon>
    </lineage>
</organism>
<gene>
    <name evidence="1" type="primary">rplD</name>
    <name type="ordered locus">CV_4185</name>
</gene>
<sequence>MELNVINTQGKAVGSLQVSDALFGREYNEALVHQVVTAFLANARSGNRAQLTRAEVKHSTKKPFRQKGTGNARAGMTSTPNRRGGGRAFPNKPDENFTQKVNRKMYRAGIATILSQLVRDERLIVVDDLSVASPKTKEFVGAVQPMGLEQALFITNELSENLYLSSRNLPNMLVIEAVQADPYSLLRFKKTVITRDAVKQLEEQWA</sequence>